<reference key="1">
    <citation type="submission" date="2007-09" db="EMBL/GenBank/DDBJ databases">
        <title>Complete sequence of chromosome of Serratia proteamaculans 568.</title>
        <authorList>
            <consortium name="US DOE Joint Genome Institute"/>
            <person name="Copeland A."/>
            <person name="Lucas S."/>
            <person name="Lapidus A."/>
            <person name="Barry K."/>
            <person name="Glavina del Rio T."/>
            <person name="Dalin E."/>
            <person name="Tice H."/>
            <person name="Pitluck S."/>
            <person name="Chain P."/>
            <person name="Malfatti S."/>
            <person name="Shin M."/>
            <person name="Vergez L."/>
            <person name="Schmutz J."/>
            <person name="Larimer F."/>
            <person name="Land M."/>
            <person name="Hauser L."/>
            <person name="Kyrpides N."/>
            <person name="Kim E."/>
            <person name="Taghavi S."/>
            <person name="Newman L."/>
            <person name="Vangronsveld J."/>
            <person name="van der Lelie D."/>
            <person name="Richardson P."/>
        </authorList>
    </citation>
    <scope>NUCLEOTIDE SEQUENCE [LARGE SCALE GENOMIC DNA]</scope>
    <source>
        <strain>568</strain>
    </source>
</reference>
<organism>
    <name type="scientific">Serratia proteamaculans (strain 568)</name>
    <dbReference type="NCBI Taxonomy" id="399741"/>
    <lineage>
        <taxon>Bacteria</taxon>
        <taxon>Pseudomonadati</taxon>
        <taxon>Pseudomonadota</taxon>
        <taxon>Gammaproteobacteria</taxon>
        <taxon>Enterobacterales</taxon>
        <taxon>Yersiniaceae</taxon>
        <taxon>Serratia</taxon>
    </lineage>
</organism>
<feature type="signal peptide" description="Tat-type signal" evidence="1">
    <location>
        <begin position="1"/>
        <end position="43"/>
    </location>
</feature>
<feature type="chain" id="PRO_5000279787" description="Protein-methionine-sulfoxide reductase catalytic subunit MsrP" evidence="1">
    <location>
        <begin position="44"/>
        <end position="333"/>
    </location>
</feature>
<feature type="binding site" evidence="1">
    <location>
        <position position="87"/>
    </location>
    <ligand>
        <name>Mo-molybdopterin</name>
        <dbReference type="ChEBI" id="CHEBI:71302"/>
    </ligand>
</feature>
<feature type="binding site" evidence="1">
    <location>
        <begin position="90"/>
        <end position="91"/>
    </location>
    <ligand>
        <name>Mo-molybdopterin</name>
        <dbReference type="ChEBI" id="CHEBI:71302"/>
    </ligand>
</feature>
<feature type="binding site" evidence="1">
    <location>
        <position position="145"/>
    </location>
    <ligand>
        <name>Mo-molybdopterin</name>
        <dbReference type="ChEBI" id="CHEBI:71302"/>
    </ligand>
    <ligandPart>
        <name>Mo</name>
        <dbReference type="ChEBI" id="CHEBI:28685"/>
    </ligandPart>
</feature>
<feature type="binding site" evidence="1">
    <location>
        <position position="180"/>
    </location>
    <ligand>
        <name>Mo-molybdopterin</name>
        <dbReference type="ChEBI" id="CHEBI:71302"/>
    </ligand>
</feature>
<feature type="binding site" evidence="1">
    <location>
        <position position="232"/>
    </location>
    <ligand>
        <name>Mo-molybdopterin</name>
        <dbReference type="ChEBI" id="CHEBI:71302"/>
    </ligand>
</feature>
<feature type="binding site" evidence="1">
    <location>
        <position position="237"/>
    </location>
    <ligand>
        <name>Mo-molybdopterin</name>
        <dbReference type="ChEBI" id="CHEBI:71302"/>
    </ligand>
</feature>
<feature type="binding site" evidence="1">
    <location>
        <begin position="248"/>
        <end position="250"/>
    </location>
    <ligand>
        <name>Mo-molybdopterin</name>
        <dbReference type="ChEBI" id="CHEBI:71302"/>
    </ligand>
</feature>
<accession>A8GK68</accession>
<keyword id="KW-0479">Metal-binding</keyword>
<keyword id="KW-0500">Molybdenum</keyword>
<keyword id="KW-0560">Oxidoreductase</keyword>
<keyword id="KW-0574">Periplasm</keyword>
<keyword id="KW-0732">Signal</keyword>
<comment type="function">
    <text evidence="1">Part of the MsrPQ system that repairs oxidized periplasmic proteins containing methionine sulfoxide residues (Met-O), using respiratory chain electrons. Thus protects these proteins from oxidative-stress damage caused by reactive species of oxygen and chlorine generated by the host defense mechanisms. MsrPQ is essential for the maintenance of envelope integrity under bleach stress, rescuing a wide series of structurally unrelated periplasmic proteins from methionine oxidation. The catalytic subunit MsrP is non-stereospecific, being able to reduce both (R-) and (S-) diastereoisomers of methionine sulfoxide.</text>
</comment>
<comment type="catalytic activity">
    <reaction evidence="1">
        <text>L-methionyl-[protein] + a quinone + H2O = L-methionyl-(S)-S-oxide-[protein] + a quinol</text>
        <dbReference type="Rhea" id="RHEA:51292"/>
        <dbReference type="Rhea" id="RHEA-COMP:12313"/>
        <dbReference type="Rhea" id="RHEA-COMP:12315"/>
        <dbReference type="ChEBI" id="CHEBI:15377"/>
        <dbReference type="ChEBI" id="CHEBI:16044"/>
        <dbReference type="ChEBI" id="CHEBI:24646"/>
        <dbReference type="ChEBI" id="CHEBI:44120"/>
        <dbReference type="ChEBI" id="CHEBI:132124"/>
    </reaction>
</comment>
<comment type="catalytic activity">
    <reaction evidence="1">
        <text>L-methionyl-[protein] + a quinone + H2O = L-methionyl-(R)-S-oxide-[protein] + a quinol</text>
        <dbReference type="Rhea" id="RHEA:51296"/>
        <dbReference type="Rhea" id="RHEA-COMP:12313"/>
        <dbReference type="Rhea" id="RHEA-COMP:12314"/>
        <dbReference type="ChEBI" id="CHEBI:15377"/>
        <dbReference type="ChEBI" id="CHEBI:16044"/>
        <dbReference type="ChEBI" id="CHEBI:24646"/>
        <dbReference type="ChEBI" id="CHEBI:45764"/>
        <dbReference type="ChEBI" id="CHEBI:132124"/>
    </reaction>
</comment>
<comment type="cofactor">
    <cofactor evidence="1">
        <name>Mo-molybdopterin</name>
        <dbReference type="ChEBI" id="CHEBI:71302"/>
    </cofactor>
    <text evidence="1">Binds 1 Mo-molybdopterin (Mo-MPT) cofactor per subunit.</text>
</comment>
<comment type="subunit">
    <text evidence="1">Heterodimer of a catalytic subunit (MsrP) and a heme-binding subunit (MsrQ).</text>
</comment>
<comment type="subcellular location">
    <subcellularLocation>
        <location evidence="1">Periplasm</location>
    </subcellularLocation>
    <text evidence="1">Is attached to the inner membrane when interacting with the MsrQ subunit.</text>
</comment>
<comment type="PTM">
    <text evidence="1">Predicted to be exported by the Tat system. The position of the signal peptide cleavage has not been experimentally proven.</text>
</comment>
<comment type="similarity">
    <text evidence="1">Belongs to the MsrP family.</text>
</comment>
<dbReference type="EC" id="1.8.5.-" evidence="1"/>
<dbReference type="EMBL" id="CP000826">
    <property type="protein sequence ID" value="ABV43508.1"/>
    <property type="molecule type" value="Genomic_DNA"/>
</dbReference>
<dbReference type="SMR" id="A8GK68"/>
<dbReference type="STRING" id="399741.Spro_4414"/>
<dbReference type="KEGG" id="spe:Spro_4414"/>
<dbReference type="eggNOG" id="COG2041">
    <property type="taxonomic scope" value="Bacteria"/>
</dbReference>
<dbReference type="HOGENOM" id="CLU_045520_0_0_6"/>
<dbReference type="OrthoDB" id="9795587at2"/>
<dbReference type="GO" id="GO:0042597">
    <property type="term" value="C:periplasmic space"/>
    <property type="evidence" value="ECO:0007669"/>
    <property type="project" value="UniProtKB-SubCell"/>
</dbReference>
<dbReference type="GO" id="GO:0046872">
    <property type="term" value="F:metal ion binding"/>
    <property type="evidence" value="ECO:0007669"/>
    <property type="project" value="UniProtKB-KW"/>
</dbReference>
<dbReference type="GO" id="GO:0043546">
    <property type="term" value="F:molybdopterin cofactor binding"/>
    <property type="evidence" value="ECO:0007669"/>
    <property type="project" value="UniProtKB-UniRule"/>
</dbReference>
<dbReference type="GO" id="GO:0016672">
    <property type="term" value="F:oxidoreductase activity, acting on a sulfur group of donors, quinone or similar compound as acceptor"/>
    <property type="evidence" value="ECO:0007669"/>
    <property type="project" value="UniProtKB-UniRule"/>
</dbReference>
<dbReference type="GO" id="GO:0030091">
    <property type="term" value="P:protein repair"/>
    <property type="evidence" value="ECO:0007669"/>
    <property type="project" value="UniProtKB-UniRule"/>
</dbReference>
<dbReference type="CDD" id="cd02107">
    <property type="entry name" value="YedY_like_Moco"/>
    <property type="match status" value="1"/>
</dbReference>
<dbReference type="Gene3D" id="3.90.420.10">
    <property type="entry name" value="Oxidoreductase, molybdopterin-binding domain"/>
    <property type="match status" value="1"/>
</dbReference>
<dbReference type="HAMAP" id="MF_01206">
    <property type="entry name" value="MsrP"/>
    <property type="match status" value="1"/>
</dbReference>
<dbReference type="InterPro" id="IPR022867">
    <property type="entry name" value="MsrP"/>
</dbReference>
<dbReference type="InterPro" id="IPR000572">
    <property type="entry name" value="OxRdtase_Mopterin-bd_dom"/>
</dbReference>
<dbReference type="InterPro" id="IPR036374">
    <property type="entry name" value="OxRdtase_Mopterin-bd_sf"/>
</dbReference>
<dbReference type="InterPro" id="IPR006311">
    <property type="entry name" value="TAT_signal"/>
</dbReference>
<dbReference type="NCBIfam" id="NF003767">
    <property type="entry name" value="PRK05363.1"/>
    <property type="match status" value="1"/>
</dbReference>
<dbReference type="PANTHER" id="PTHR43032">
    <property type="entry name" value="PROTEIN-METHIONINE-SULFOXIDE REDUCTASE"/>
    <property type="match status" value="1"/>
</dbReference>
<dbReference type="PANTHER" id="PTHR43032:SF3">
    <property type="entry name" value="PROTEIN-METHIONINE-SULFOXIDE REDUCTASE CATALYTIC SUBUNIT MSRP"/>
    <property type="match status" value="1"/>
</dbReference>
<dbReference type="Pfam" id="PF00174">
    <property type="entry name" value="Oxidored_molyb"/>
    <property type="match status" value="1"/>
</dbReference>
<dbReference type="SUPFAM" id="SSF56524">
    <property type="entry name" value="Oxidoreductase molybdopterin-binding domain"/>
    <property type="match status" value="1"/>
</dbReference>
<dbReference type="PROSITE" id="PS51318">
    <property type="entry name" value="TAT"/>
    <property type="match status" value="1"/>
</dbReference>
<gene>
    <name evidence="1" type="primary">msrP</name>
    <name type="ordered locus">Spro_4414</name>
</gene>
<sequence length="333" mass="37551">MSKQRKLTEADVTPESVFYQRRKVLQALGITAASLALPHNAQADLLSWFKGNDRPKAPPGKPLEFSKPAAWQAQLDLTPEDKVTGYNNFYEFGLDKADPAANAGGLKTEGWQVRIDGEVAKPITLDIDDLIKRFPLEQRIYRMRCVEAWSMVVPWIGFELGKLIKFAEPNSNARYVAFQTLYDPEQMPGQKDRFIGGGLKYPYVEGLRLDEAMNPLALLTVGVYGKTLPPQNGAPLRLITPWKYGFKGIKSIVHIRLVRDQPPTTWNQSAPNEYGFYANVNPHVDHPRWSQATERFIGSGGILDVKRQPTLLFNGYAEQVASLYRGLDLRENF</sequence>
<proteinExistence type="inferred from homology"/>
<name>MSRP_SERP5</name>
<evidence type="ECO:0000255" key="1">
    <source>
        <dbReference type="HAMAP-Rule" id="MF_01206"/>
    </source>
</evidence>
<protein>
    <recommendedName>
        <fullName evidence="1">Protein-methionine-sulfoxide reductase catalytic subunit MsrP</fullName>
        <ecNumber evidence="1">1.8.5.-</ecNumber>
    </recommendedName>
</protein>